<gene>
    <name type="primary">DUSP3</name>
</gene>
<accession>Q5RD73</accession>
<evidence type="ECO:0000250" key="1">
    <source>
        <dbReference type="UniProtKB" id="P51452"/>
    </source>
</evidence>
<evidence type="ECO:0000250" key="2">
    <source>
        <dbReference type="UniProtKB" id="Q9D7X3"/>
    </source>
</evidence>
<evidence type="ECO:0000255" key="3">
    <source>
        <dbReference type="PROSITE-ProRule" id="PRU00160"/>
    </source>
</evidence>
<evidence type="ECO:0000255" key="4">
    <source>
        <dbReference type="PROSITE-ProRule" id="PRU10044"/>
    </source>
</evidence>
<evidence type="ECO:0000305" key="5"/>
<protein>
    <recommendedName>
        <fullName>Dual specificity protein phosphatase 3</fullName>
        <ecNumber>3.1.3.16</ecNumber>
        <ecNumber>3.1.3.48</ecNumber>
    </recommendedName>
    <alternativeName>
        <fullName>Vaccinia H1-related phosphatase</fullName>
        <shortName>VHR</shortName>
    </alternativeName>
</protein>
<reference key="1">
    <citation type="submission" date="2004-11" db="EMBL/GenBank/DDBJ databases">
        <authorList>
            <consortium name="The German cDNA consortium"/>
        </authorList>
    </citation>
    <scope>NUCLEOTIDE SEQUENCE [LARGE SCALE MRNA]</scope>
    <source>
        <tissue>Kidney</tissue>
    </source>
</reference>
<comment type="function">
    <text evidence="1 2">Shows activity both for tyrosine-protein phosphate and serine-protein phosphate, but displays a strong preference toward phosphotyrosines. Specifically dephosphorylates and inactivates ERK1 and ERK2 (By similarity).</text>
</comment>
<comment type="catalytic activity">
    <reaction evidence="4">
        <text>O-phospho-L-tyrosyl-[protein] + H2O = L-tyrosyl-[protein] + phosphate</text>
        <dbReference type="Rhea" id="RHEA:10684"/>
        <dbReference type="Rhea" id="RHEA-COMP:10136"/>
        <dbReference type="Rhea" id="RHEA-COMP:20101"/>
        <dbReference type="ChEBI" id="CHEBI:15377"/>
        <dbReference type="ChEBI" id="CHEBI:43474"/>
        <dbReference type="ChEBI" id="CHEBI:46858"/>
        <dbReference type="ChEBI" id="CHEBI:61978"/>
        <dbReference type="EC" id="3.1.3.48"/>
    </reaction>
</comment>
<comment type="catalytic activity">
    <reaction>
        <text>O-phospho-L-seryl-[protein] + H2O = L-seryl-[protein] + phosphate</text>
        <dbReference type="Rhea" id="RHEA:20629"/>
        <dbReference type="Rhea" id="RHEA-COMP:9863"/>
        <dbReference type="Rhea" id="RHEA-COMP:11604"/>
        <dbReference type="ChEBI" id="CHEBI:15377"/>
        <dbReference type="ChEBI" id="CHEBI:29999"/>
        <dbReference type="ChEBI" id="CHEBI:43474"/>
        <dbReference type="ChEBI" id="CHEBI:83421"/>
        <dbReference type="EC" id="3.1.3.16"/>
    </reaction>
</comment>
<comment type="catalytic activity">
    <reaction>
        <text>O-phospho-L-threonyl-[protein] + H2O = L-threonyl-[protein] + phosphate</text>
        <dbReference type="Rhea" id="RHEA:47004"/>
        <dbReference type="Rhea" id="RHEA-COMP:11060"/>
        <dbReference type="Rhea" id="RHEA-COMP:11605"/>
        <dbReference type="ChEBI" id="CHEBI:15377"/>
        <dbReference type="ChEBI" id="CHEBI:30013"/>
        <dbReference type="ChEBI" id="CHEBI:43474"/>
        <dbReference type="ChEBI" id="CHEBI:61977"/>
        <dbReference type="EC" id="3.1.3.16"/>
    </reaction>
</comment>
<comment type="subunit">
    <text evidence="2">Microtubule inner protein component of sperm flagellar doublet microtubules. Interacts with VRK3; this interaction activates DUSP3 phosphatase activity.</text>
</comment>
<comment type="subcellular location">
    <subcellularLocation>
        <location evidence="2">Nucleus</location>
    </subcellularLocation>
    <subcellularLocation>
        <location evidence="2">Cytoplasm</location>
        <location evidence="2">Cytoskeleton</location>
        <location evidence="2">Flagellum axoneme</location>
    </subcellularLocation>
</comment>
<comment type="similarity">
    <text evidence="5">Belongs to the protein-tyrosine phosphatase family. Non-receptor class dual specificity subfamily.</text>
</comment>
<keyword id="KW-0966">Cell projection</keyword>
<keyword id="KW-0969">Cilium</keyword>
<keyword id="KW-0963">Cytoplasm</keyword>
<keyword id="KW-0206">Cytoskeleton</keyword>
<keyword id="KW-0282">Flagellum</keyword>
<keyword id="KW-0378">Hydrolase</keyword>
<keyword id="KW-0539">Nucleus</keyword>
<keyword id="KW-0904">Protein phosphatase</keyword>
<keyword id="KW-1185">Reference proteome</keyword>
<proteinExistence type="evidence at transcript level"/>
<sequence length="185" mass="20478">MSGSFELSVQDLNDLLSDGSGCYSLPSQPCNEVTPRIYVGNASVAQDIPKLQKLGITHVLNAAEGRSFMHVNTNANFYKDSGITYLGIKANDTQEFNLSAYFERAADFIDQALAQKNGRVLVHCREGYSRSPTLVIAYLMMRQKMDVKSALSIVRQNREIGPNDGFLAQLCQLNDRLAKEGKLKP</sequence>
<organism>
    <name type="scientific">Pongo abelii</name>
    <name type="common">Sumatran orangutan</name>
    <name type="synonym">Pongo pygmaeus abelii</name>
    <dbReference type="NCBI Taxonomy" id="9601"/>
    <lineage>
        <taxon>Eukaryota</taxon>
        <taxon>Metazoa</taxon>
        <taxon>Chordata</taxon>
        <taxon>Craniata</taxon>
        <taxon>Vertebrata</taxon>
        <taxon>Euteleostomi</taxon>
        <taxon>Mammalia</taxon>
        <taxon>Eutheria</taxon>
        <taxon>Euarchontoglires</taxon>
        <taxon>Primates</taxon>
        <taxon>Haplorrhini</taxon>
        <taxon>Catarrhini</taxon>
        <taxon>Hominidae</taxon>
        <taxon>Pongo</taxon>
    </lineage>
</organism>
<dbReference type="EC" id="3.1.3.16"/>
<dbReference type="EC" id="3.1.3.48"/>
<dbReference type="EMBL" id="CR858043">
    <property type="protein sequence ID" value="CAH90284.1"/>
    <property type="molecule type" value="mRNA"/>
</dbReference>
<dbReference type="RefSeq" id="NP_001125129.1">
    <property type="nucleotide sequence ID" value="NM_001131657.1"/>
</dbReference>
<dbReference type="SMR" id="Q5RD73"/>
<dbReference type="FunCoup" id="Q5RD73">
    <property type="interactions" value="1712"/>
</dbReference>
<dbReference type="STRING" id="9601.ENSPPYP00000009390"/>
<dbReference type="GeneID" id="100172013"/>
<dbReference type="KEGG" id="pon:100172013"/>
<dbReference type="CTD" id="1845"/>
<dbReference type="eggNOG" id="KOG1716">
    <property type="taxonomic scope" value="Eukaryota"/>
</dbReference>
<dbReference type="HOGENOM" id="CLU_027074_11_3_1"/>
<dbReference type="InParanoid" id="Q5RD73"/>
<dbReference type="OrthoDB" id="253091at2759"/>
<dbReference type="TreeFam" id="TF105128"/>
<dbReference type="Proteomes" id="UP000001595">
    <property type="component" value="Chromosome 17"/>
</dbReference>
<dbReference type="GO" id="GO:0005856">
    <property type="term" value="C:cytoskeleton"/>
    <property type="evidence" value="ECO:0007669"/>
    <property type="project" value="UniProtKB-KW"/>
</dbReference>
<dbReference type="GO" id="GO:0005829">
    <property type="term" value="C:cytosol"/>
    <property type="evidence" value="ECO:0007669"/>
    <property type="project" value="TreeGrafter"/>
</dbReference>
<dbReference type="GO" id="GO:0031514">
    <property type="term" value="C:motile cilium"/>
    <property type="evidence" value="ECO:0007669"/>
    <property type="project" value="UniProtKB-KW"/>
</dbReference>
<dbReference type="GO" id="GO:0005634">
    <property type="term" value="C:nucleus"/>
    <property type="evidence" value="ECO:0007669"/>
    <property type="project" value="UniProtKB-SubCell"/>
</dbReference>
<dbReference type="GO" id="GO:0033549">
    <property type="term" value="F:MAP kinase phosphatase activity"/>
    <property type="evidence" value="ECO:0007669"/>
    <property type="project" value="TreeGrafter"/>
</dbReference>
<dbReference type="GO" id="GO:0016791">
    <property type="term" value="F:phosphatase activity"/>
    <property type="evidence" value="ECO:0000250"/>
    <property type="project" value="UniProtKB"/>
</dbReference>
<dbReference type="GO" id="GO:0004722">
    <property type="term" value="F:protein serine/threonine phosphatase activity"/>
    <property type="evidence" value="ECO:0007669"/>
    <property type="project" value="UniProtKB-EC"/>
</dbReference>
<dbReference type="GO" id="GO:0004725">
    <property type="term" value="F:protein tyrosine phosphatase activity"/>
    <property type="evidence" value="ECO:0007669"/>
    <property type="project" value="UniProtKB-EC"/>
</dbReference>
<dbReference type="GO" id="GO:0008138">
    <property type="term" value="F:protein tyrosine/serine/threonine phosphatase activity"/>
    <property type="evidence" value="ECO:0007669"/>
    <property type="project" value="InterPro"/>
</dbReference>
<dbReference type="GO" id="GO:0016311">
    <property type="term" value="P:dephosphorylation"/>
    <property type="evidence" value="ECO:0000250"/>
    <property type="project" value="UniProtKB"/>
</dbReference>
<dbReference type="GO" id="GO:0070373">
    <property type="term" value="P:negative regulation of ERK1 and ERK2 cascade"/>
    <property type="evidence" value="ECO:0007669"/>
    <property type="project" value="TreeGrafter"/>
</dbReference>
<dbReference type="GO" id="GO:0046329">
    <property type="term" value="P:negative regulation of JNK cascade"/>
    <property type="evidence" value="ECO:0007669"/>
    <property type="project" value="TreeGrafter"/>
</dbReference>
<dbReference type="GO" id="GO:0050868">
    <property type="term" value="P:negative regulation of T cell activation"/>
    <property type="evidence" value="ECO:0007669"/>
    <property type="project" value="TreeGrafter"/>
</dbReference>
<dbReference type="GO" id="GO:0050860">
    <property type="term" value="P:negative regulation of T cell receptor signaling pathway"/>
    <property type="evidence" value="ECO:0007669"/>
    <property type="project" value="TreeGrafter"/>
</dbReference>
<dbReference type="GO" id="GO:0045931">
    <property type="term" value="P:positive regulation of mitotic cell cycle"/>
    <property type="evidence" value="ECO:0007669"/>
    <property type="project" value="TreeGrafter"/>
</dbReference>
<dbReference type="CDD" id="cd14579">
    <property type="entry name" value="DUSP3"/>
    <property type="match status" value="1"/>
</dbReference>
<dbReference type="FunFam" id="3.90.190.10:FF:000065">
    <property type="entry name" value="Dual specificity protein phosphatase 3"/>
    <property type="match status" value="1"/>
</dbReference>
<dbReference type="Gene3D" id="3.90.190.10">
    <property type="entry name" value="Protein tyrosine phosphatase superfamily"/>
    <property type="match status" value="1"/>
</dbReference>
<dbReference type="InterPro" id="IPR020405">
    <property type="entry name" value="Atypical_DUSP_subfamA"/>
</dbReference>
<dbReference type="InterPro" id="IPR000340">
    <property type="entry name" value="Dual-sp_phosphatase_cat-dom"/>
</dbReference>
<dbReference type="InterPro" id="IPR029021">
    <property type="entry name" value="Prot-tyrosine_phosphatase-like"/>
</dbReference>
<dbReference type="InterPro" id="IPR016130">
    <property type="entry name" value="Tyr_Pase_AS"/>
</dbReference>
<dbReference type="InterPro" id="IPR000387">
    <property type="entry name" value="Tyr_Pase_dom"/>
</dbReference>
<dbReference type="InterPro" id="IPR020422">
    <property type="entry name" value="TYR_PHOSPHATASE_DUAL_dom"/>
</dbReference>
<dbReference type="PANTHER" id="PTHR45682">
    <property type="entry name" value="AGAP008228-PA"/>
    <property type="match status" value="1"/>
</dbReference>
<dbReference type="PANTHER" id="PTHR45682:SF1">
    <property type="entry name" value="DUAL SPECIFICITY PROTEIN PHOSPHATASE 3"/>
    <property type="match status" value="1"/>
</dbReference>
<dbReference type="Pfam" id="PF00782">
    <property type="entry name" value="DSPc"/>
    <property type="match status" value="1"/>
</dbReference>
<dbReference type="PRINTS" id="PR01908">
    <property type="entry name" value="ADSPHPHTASE"/>
</dbReference>
<dbReference type="PRINTS" id="PR01909">
    <property type="entry name" value="ADSPHPHTASEA"/>
</dbReference>
<dbReference type="SMART" id="SM00195">
    <property type="entry name" value="DSPc"/>
    <property type="match status" value="1"/>
</dbReference>
<dbReference type="SUPFAM" id="SSF52799">
    <property type="entry name" value="(Phosphotyrosine protein) phosphatases II"/>
    <property type="match status" value="1"/>
</dbReference>
<dbReference type="PROSITE" id="PS00383">
    <property type="entry name" value="TYR_PHOSPHATASE_1"/>
    <property type="match status" value="1"/>
</dbReference>
<dbReference type="PROSITE" id="PS50056">
    <property type="entry name" value="TYR_PHOSPHATASE_2"/>
    <property type="match status" value="1"/>
</dbReference>
<dbReference type="PROSITE" id="PS50054">
    <property type="entry name" value="TYR_PHOSPHATASE_DUAL"/>
    <property type="match status" value="1"/>
</dbReference>
<feature type="chain" id="PRO_0000094797" description="Dual specificity protein phosphatase 3">
    <location>
        <begin position="1"/>
        <end position="185"/>
    </location>
</feature>
<feature type="domain" description="Tyrosine-protein phosphatase" evidence="3">
    <location>
        <begin position="28"/>
        <end position="179"/>
    </location>
</feature>
<feature type="active site" description="Phosphocysteine intermediate" evidence="3">
    <location>
        <position position="124"/>
    </location>
</feature>
<name>DUS3_PONAB</name>